<gene>
    <name evidence="8" type="primary">Klri2</name>
</gene>
<keyword id="KW-1003">Cell membrane</keyword>
<keyword id="KW-1015">Disulfide bond</keyword>
<keyword id="KW-0325">Glycoprotein</keyword>
<keyword id="KW-0430">Lectin</keyword>
<keyword id="KW-0472">Membrane</keyword>
<keyword id="KW-0675">Receptor</keyword>
<keyword id="KW-1185">Reference proteome</keyword>
<keyword id="KW-0735">Signal-anchor</keyword>
<keyword id="KW-0812">Transmembrane</keyword>
<keyword id="KW-1133">Transmembrane helix</keyword>
<feature type="chain" id="PRO_0000442201" description="Killer cell lectin-like receptor subfamily I member 2">
    <location>
        <begin position="1"/>
        <end position="248"/>
    </location>
</feature>
<feature type="topological domain" description="Cytoplasmic" evidence="9">
    <location>
        <begin position="1"/>
        <end position="79"/>
    </location>
</feature>
<feature type="transmembrane region" description="Helical; Signal-anchor for type II membrane protein" evidence="3">
    <location>
        <begin position="80"/>
        <end position="100"/>
    </location>
</feature>
<feature type="topological domain" description="Extracellular" evidence="9">
    <location>
        <begin position="101"/>
        <end position="248"/>
    </location>
</feature>
<feature type="domain" description="C-type lectin" evidence="4">
    <location>
        <begin position="139"/>
        <end position="245"/>
    </location>
</feature>
<feature type="region of interest" description="Disordered" evidence="6">
    <location>
        <begin position="19"/>
        <end position="44"/>
    </location>
</feature>
<feature type="compositionally biased region" description="Basic and acidic residues" evidence="6">
    <location>
        <begin position="28"/>
        <end position="44"/>
    </location>
</feature>
<feature type="glycosylation site" description="N-linked (GlcNAc...) asparagine" evidence="5">
    <location>
        <position position="197"/>
    </location>
</feature>
<feature type="glycosylation site" description="N-linked (GlcNAc...) asparagine" evidence="5">
    <location>
        <position position="214"/>
    </location>
</feature>
<feature type="glycosylation site" description="N-linked (GlcNAc...) asparagine" evidence="5">
    <location>
        <position position="220"/>
    </location>
</feature>
<feature type="disulfide bond" evidence="1">
    <location>
        <begin position="132"/>
        <end position="145"/>
    </location>
</feature>
<feature type="disulfide bond" evidence="1">
    <location>
        <begin position="161"/>
        <end position="244"/>
    </location>
</feature>
<feature type="disulfide bond" evidence="1">
    <location>
        <begin position="223"/>
        <end position="236"/>
    </location>
</feature>
<feature type="sequence conflict" description="In Ref. 2; BAC30742." evidence="9" ref="2">
    <original>R</original>
    <variation>H</variation>
    <location>
        <position position="227"/>
    </location>
</feature>
<name>KLRI2_MOUSE</name>
<dbReference type="EMBL" id="AY324873">
    <property type="protein sequence ID" value="AAR00558.1"/>
    <property type="molecule type" value="mRNA"/>
</dbReference>
<dbReference type="EMBL" id="AK040915">
    <property type="protein sequence ID" value="BAC30742.1"/>
    <property type="molecule type" value="mRNA"/>
</dbReference>
<dbReference type="EMBL" id="AC171002">
    <property type="status" value="NOT_ANNOTATED_CDS"/>
    <property type="molecule type" value="Genomic_DNA"/>
</dbReference>
<dbReference type="EMBL" id="BC132406">
    <property type="protein sequence ID" value="AAI32407.1"/>
    <property type="molecule type" value="mRNA"/>
</dbReference>
<dbReference type="EMBL" id="BC132408">
    <property type="protein sequence ID" value="AAI32409.1"/>
    <property type="molecule type" value="mRNA"/>
</dbReference>
<dbReference type="CCDS" id="CCDS20594.1"/>
<dbReference type="RefSeq" id="NP_796129.2">
    <property type="nucleotide sequence ID" value="NM_177155.4"/>
</dbReference>
<dbReference type="SMR" id="Q5DT36"/>
<dbReference type="FunCoup" id="Q5DT36">
    <property type="interactions" value="30"/>
</dbReference>
<dbReference type="STRING" id="10090.ENSMUSP00000052805"/>
<dbReference type="GlyCosmos" id="Q5DT36">
    <property type="glycosylation" value="3 sites, No reported glycans"/>
</dbReference>
<dbReference type="GlyGen" id="Q5DT36">
    <property type="glycosylation" value="3 sites"/>
</dbReference>
<dbReference type="iPTMnet" id="Q5DT36"/>
<dbReference type="PhosphoSitePlus" id="Q5DT36"/>
<dbReference type="PaxDb" id="10090-ENSMUSP00000052805"/>
<dbReference type="DNASU" id="320407"/>
<dbReference type="Ensembl" id="ENSMUST00000050385.6">
    <property type="protein sequence ID" value="ENSMUSP00000052805.6"/>
    <property type="gene ID" value="ENSMUSG00000043932.6"/>
</dbReference>
<dbReference type="GeneID" id="320407"/>
<dbReference type="KEGG" id="mmu:320407"/>
<dbReference type="UCSC" id="uc009egr.2">
    <property type="organism name" value="mouse"/>
</dbReference>
<dbReference type="AGR" id="MGI:2443965"/>
<dbReference type="CTD" id="320407"/>
<dbReference type="MGI" id="MGI:2443965">
    <property type="gene designation" value="Klri2"/>
</dbReference>
<dbReference type="VEuPathDB" id="HostDB:ENSMUSG00000043932"/>
<dbReference type="eggNOG" id="KOG4297">
    <property type="taxonomic scope" value="Eukaryota"/>
</dbReference>
<dbReference type="GeneTree" id="ENSGT00940000164228"/>
<dbReference type="HOGENOM" id="CLU_049894_9_2_1"/>
<dbReference type="InParanoid" id="Q5DT36"/>
<dbReference type="OMA" id="SKNDECS"/>
<dbReference type="OrthoDB" id="7357196at2759"/>
<dbReference type="PhylomeDB" id="Q5DT36"/>
<dbReference type="TreeFam" id="TF336674"/>
<dbReference type="BioGRID-ORCS" id="320407">
    <property type="hits" value="2 hits in 76 CRISPR screens"/>
</dbReference>
<dbReference type="PRO" id="PR:Q5DT36"/>
<dbReference type="Proteomes" id="UP000000589">
    <property type="component" value="Chromosome 6"/>
</dbReference>
<dbReference type="RNAct" id="Q5DT36">
    <property type="molecule type" value="protein"/>
</dbReference>
<dbReference type="Bgee" id="ENSMUSG00000043932">
    <property type="expression patterns" value="Expressed in spleen and 6 other cell types or tissues"/>
</dbReference>
<dbReference type="GO" id="GO:0005886">
    <property type="term" value="C:plasma membrane"/>
    <property type="evidence" value="ECO:0000266"/>
    <property type="project" value="MGI"/>
</dbReference>
<dbReference type="GO" id="GO:0030246">
    <property type="term" value="F:carbohydrate binding"/>
    <property type="evidence" value="ECO:0007669"/>
    <property type="project" value="UniProtKB-KW"/>
</dbReference>
<dbReference type="CDD" id="cd03593">
    <property type="entry name" value="CLECT_NK_receptors_like"/>
    <property type="match status" value="1"/>
</dbReference>
<dbReference type="FunFam" id="3.10.100.10:FF:000175">
    <property type="entry name" value="Killer cell lectin-like receptor subfamily I member 1"/>
    <property type="match status" value="1"/>
</dbReference>
<dbReference type="Gene3D" id="3.10.100.10">
    <property type="entry name" value="Mannose-Binding Protein A, subunit A"/>
    <property type="match status" value="1"/>
</dbReference>
<dbReference type="InterPro" id="IPR001304">
    <property type="entry name" value="C-type_lectin-like"/>
</dbReference>
<dbReference type="InterPro" id="IPR016186">
    <property type="entry name" value="C-type_lectin-like/link_sf"/>
</dbReference>
<dbReference type="InterPro" id="IPR016187">
    <property type="entry name" value="CTDL_fold"/>
</dbReference>
<dbReference type="InterPro" id="IPR050919">
    <property type="entry name" value="NKG2/CD94_NK_receptors"/>
</dbReference>
<dbReference type="InterPro" id="IPR033992">
    <property type="entry name" value="NKR-like_CTLD"/>
</dbReference>
<dbReference type="PANTHER" id="PTHR22800">
    <property type="entry name" value="C-TYPE LECTIN PROTEINS"/>
    <property type="match status" value="1"/>
</dbReference>
<dbReference type="PANTHER" id="PTHR22800:SF237">
    <property type="entry name" value="KILLER CELL LECTIN-LIKE RECEPTOR SUBFAMILY I MEMBER 2"/>
    <property type="match status" value="1"/>
</dbReference>
<dbReference type="Pfam" id="PF00059">
    <property type="entry name" value="Lectin_C"/>
    <property type="match status" value="1"/>
</dbReference>
<dbReference type="SMART" id="SM00034">
    <property type="entry name" value="CLECT"/>
    <property type="match status" value="1"/>
</dbReference>
<dbReference type="SUPFAM" id="SSF56436">
    <property type="entry name" value="C-type lectin-like"/>
    <property type="match status" value="1"/>
</dbReference>
<dbReference type="PROSITE" id="PS50041">
    <property type="entry name" value="C_TYPE_LECTIN_2"/>
    <property type="match status" value="1"/>
</dbReference>
<comment type="function">
    <text evidence="2">Lectin-like receptor for natural killer (NK) cells. Heterodimer formation with KLRE1 mediates NK cell cytolytic activity.</text>
</comment>
<comment type="subunit">
    <text evidence="2">Heterodimer with KLRE1.</text>
</comment>
<comment type="subcellular location">
    <subcellularLocation>
        <location evidence="2">Cell membrane</location>
        <topology evidence="3">Single-pass type II membrane protein</topology>
    </subcellularLocation>
</comment>
<comment type="tissue specificity">
    <text evidence="7">Expressed in natural killer (NK) cells.</text>
</comment>
<accession>Q5DT36</accession>
<accession>Q8BS07</accession>
<organism>
    <name type="scientific">Mus musculus</name>
    <name type="common">Mouse</name>
    <dbReference type="NCBI Taxonomy" id="10090"/>
    <lineage>
        <taxon>Eukaryota</taxon>
        <taxon>Metazoa</taxon>
        <taxon>Chordata</taxon>
        <taxon>Craniata</taxon>
        <taxon>Vertebrata</taxon>
        <taxon>Euteleostomi</taxon>
        <taxon>Mammalia</taxon>
        <taxon>Eutheria</taxon>
        <taxon>Euarchontoglires</taxon>
        <taxon>Glires</taxon>
        <taxon>Rodentia</taxon>
        <taxon>Myomorpha</taxon>
        <taxon>Muroidea</taxon>
        <taxon>Muridae</taxon>
        <taxon>Murinae</taxon>
        <taxon>Mus</taxon>
        <taxon>Mus</taxon>
    </lineage>
</organism>
<protein>
    <recommendedName>
        <fullName evidence="8">Killer cell lectin-like receptor subfamily I member 2</fullName>
    </recommendedName>
</protein>
<evidence type="ECO:0000250" key="1">
    <source>
        <dbReference type="UniProtKB" id="Q13241"/>
    </source>
</evidence>
<evidence type="ECO:0000250" key="2">
    <source>
        <dbReference type="UniProtKB" id="Q5DT37"/>
    </source>
</evidence>
<evidence type="ECO:0000255" key="3"/>
<evidence type="ECO:0000255" key="4">
    <source>
        <dbReference type="PROSITE-ProRule" id="PRU00040"/>
    </source>
</evidence>
<evidence type="ECO:0000255" key="5">
    <source>
        <dbReference type="PROSITE-ProRule" id="PRU00498"/>
    </source>
</evidence>
<evidence type="ECO:0000256" key="6">
    <source>
        <dbReference type="SAM" id="MobiDB-lite"/>
    </source>
</evidence>
<evidence type="ECO:0000269" key="7">
    <source>
    </source>
</evidence>
<evidence type="ECO:0000303" key="8">
    <source>
    </source>
</evidence>
<evidence type="ECO:0000305" key="9"/>
<evidence type="ECO:0000312" key="10">
    <source>
        <dbReference type="EMBL" id="AAI32407.1"/>
    </source>
</evidence>
<evidence type="ECO:0000312" key="11">
    <source>
        <dbReference type="EMBL" id="AAR00558.1"/>
    </source>
</evidence>
<evidence type="ECO:0000312" key="12">
    <source>
        <dbReference type="EMBL" id="BAC30742.1"/>
    </source>
</evidence>
<evidence type="ECO:0000312" key="13">
    <source>
        <dbReference type="Proteomes" id="UP000000589"/>
    </source>
</evidence>
<proteinExistence type="evidence at transcript level"/>
<sequence>MHKKKHIKHGTNKQEIINIGTKSPTFQEKQRPSKTDQRSTVWREEQKKQELKVHRIFHPQPRTGFDVGKGIDPWLTTWQMITVILATLCIILVTKVGFLIPSLFSKGEKQSRKFSLLDPLCDRNDDSSCDFCSSDWIAFGNNFYCVFRENSKTWVESQSACEELNSHLVIIDSKAEVENLLLFEMDGWILHRMDGTNSSRLWGNDIKIRNTLMNDSEKKNHSCHYLRGNIFMPDECSAKKTYICEFNI</sequence>
<reference evidence="11" key="1">
    <citation type="journal article" date="2005" name="Immunogenetics">
        <title>Molecular cloning of KLRI1 and KLRI2, a novel pair of lectin-like natural killer-cell receptors with opposing signalling motifs.</title>
        <authorList>
            <person name="Saether P.C."/>
            <person name="Westgaard I.H."/>
            <person name="Flornes L.M."/>
            <person name="Hoelsbrekken S.E."/>
            <person name="Ryan J.C."/>
            <person name="Fossum S."/>
            <person name="Dissen E."/>
        </authorList>
    </citation>
    <scope>NUCLEOTIDE SEQUENCE [MRNA]</scope>
    <scope>TISSUE SPECIFICITY</scope>
    <source>
        <strain evidence="11">C57BL/6J</strain>
    </source>
</reference>
<reference evidence="12" key="2">
    <citation type="journal article" date="2005" name="Science">
        <title>The transcriptional landscape of the mammalian genome.</title>
        <authorList>
            <person name="Carninci P."/>
            <person name="Kasukawa T."/>
            <person name="Katayama S."/>
            <person name="Gough J."/>
            <person name="Frith M.C."/>
            <person name="Maeda N."/>
            <person name="Oyama R."/>
            <person name="Ravasi T."/>
            <person name="Lenhard B."/>
            <person name="Wells C."/>
            <person name="Kodzius R."/>
            <person name="Shimokawa K."/>
            <person name="Bajic V.B."/>
            <person name="Brenner S.E."/>
            <person name="Batalov S."/>
            <person name="Forrest A.R."/>
            <person name="Zavolan M."/>
            <person name="Davis M.J."/>
            <person name="Wilming L.G."/>
            <person name="Aidinis V."/>
            <person name="Allen J.E."/>
            <person name="Ambesi-Impiombato A."/>
            <person name="Apweiler R."/>
            <person name="Aturaliya R.N."/>
            <person name="Bailey T.L."/>
            <person name="Bansal M."/>
            <person name="Baxter L."/>
            <person name="Beisel K.W."/>
            <person name="Bersano T."/>
            <person name="Bono H."/>
            <person name="Chalk A.M."/>
            <person name="Chiu K.P."/>
            <person name="Choudhary V."/>
            <person name="Christoffels A."/>
            <person name="Clutterbuck D.R."/>
            <person name="Crowe M.L."/>
            <person name="Dalla E."/>
            <person name="Dalrymple B.P."/>
            <person name="de Bono B."/>
            <person name="Della Gatta G."/>
            <person name="di Bernardo D."/>
            <person name="Down T."/>
            <person name="Engstrom P."/>
            <person name="Fagiolini M."/>
            <person name="Faulkner G."/>
            <person name="Fletcher C.F."/>
            <person name="Fukushima T."/>
            <person name="Furuno M."/>
            <person name="Futaki S."/>
            <person name="Gariboldi M."/>
            <person name="Georgii-Hemming P."/>
            <person name="Gingeras T.R."/>
            <person name="Gojobori T."/>
            <person name="Green R.E."/>
            <person name="Gustincich S."/>
            <person name="Harbers M."/>
            <person name="Hayashi Y."/>
            <person name="Hensch T.K."/>
            <person name="Hirokawa N."/>
            <person name="Hill D."/>
            <person name="Huminiecki L."/>
            <person name="Iacono M."/>
            <person name="Ikeo K."/>
            <person name="Iwama A."/>
            <person name="Ishikawa T."/>
            <person name="Jakt M."/>
            <person name="Kanapin A."/>
            <person name="Katoh M."/>
            <person name="Kawasawa Y."/>
            <person name="Kelso J."/>
            <person name="Kitamura H."/>
            <person name="Kitano H."/>
            <person name="Kollias G."/>
            <person name="Krishnan S.P."/>
            <person name="Kruger A."/>
            <person name="Kummerfeld S.K."/>
            <person name="Kurochkin I.V."/>
            <person name="Lareau L.F."/>
            <person name="Lazarevic D."/>
            <person name="Lipovich L."/>
            <person name="Liu J."/>
            <person name="Liuni S."/>
            <person name="McWilliam S."/>
            <person name="Madan Babu M."/>
            <person name="Madera M."/>
            <person name="Marchionni L."/>
            <person name="Matsuda H."/>
            <person name="Matsuzawa S."/>
            <person name="Miki H."/>
            <person name="Mignone F."/>
            <person name="Miyake S."/>
            <person name="Morris K."/>
            <person name="Mottagui-Tabar S."/>
            <person name="Mulder N."/>
            <person name="Nakano N."/>
            <person name="Nakauchi H."/>
            <person name="Ng P."/>
            <person name="Nilsson R."/>
            <person name="Nishiguchi S."/>
            <person name="Nishikawa S."/>
            <person name="Nori F."/>
            <person name="Ohara O."/>
            <person name="Okazaki Y."/>
            <person name="Orlando V."/>
            <person name="Pang K.C."/>
            <person name="Pavan W.J."/>
            <person name="Pavesi G."/>
            <person name="Pesole G."/>
            <person name="Petrovsky N."/>
            <person name="Piazza S."/>
            <person name="Reed J."/>
            <person name="Reid J.F."/>
            <person name="Ring B.Z."/>
            <person name="Ringwald M."/>
            <person name="Rost B."/>
            <person name="Ruan Y."/>
            <person name="Salzberg S.L."/>
            <person name="Sandelin A."/>
            <person name="Schneider C."/>
            <person name="Schoenbach C."/>
            <person name="Sekiguchi K."/>
            <person name="Semple C.A."/>
            <person name="Seno S."/>
            <person name="Sessa L."/>
            <person name="Sheng Y."/>
            <person name="Shibata Y."/>
            <person name="Shimada H."/>
            <person name="Shimada K."/>
            <person name="Silva D."/>
            <person name="Sinclair B."/>
            <person name="Sperling S."/>
            <person name="Stupka E."/>
            <person name="Sugiura K."/>
            <person name="Sultana R."/>
            <person name="Takenaka Y."/>
            <person name="Taki K."/>
            <person name="Tammoja K."/>
            <person name="Tan S.L."/>
            <person name="Tang S."/>
            <person name="Taylor M.S."/>
            <person name="Tegner J."/>
            <person name="Teichmann S.A."/>
            <person name="Ueda H.R."/>
            <person name="van Nimwegen E."/>
            <person name="Verardo R."/>
            <person name="Wei C.L."/>
            <person name="Yagi K."/>
            <person name="Yamanishi H."/>
            <person name="Zabarovsky E."/>
            <person name="Zhu S."/>
            <person name="Zimmer A."/>
            <person name="Hide W."/>
            <person name="Bult C."/>
            <person name="Grimmond S.M."/>
            <person name="Teasdale R.D."/>
            <person name="Liu E.T."/>
            <person name="Brusic V."/>
            <person name="Quackenbush J."/>
            <person name="Wahlestedt C."/>
            <person name="Mattick J.S."/>
            <person name="Hume D.A."/>
            <person name="Kai C."/>
            <person name="Sasaki D."/>
            <person name="Tomaru Y."/>
            <person name="Fukuda S."/>
            <person name="Kanamori-Katayama M."/>
            <person name="Suzuki M."/>
            <person name="Aoki J."/>
            <person name="Arakawa T."/>
            <person name="Iida J."/>
            <person name="Imamura K."/>
            <person name="Itoh M."/>
            <person name="Kato T."/>
            <person name="Kawaji H."/>
            <person name="Kawagashira N."/>
            <person name="Kawashima T."/>
            <person name="Kojima M."/>
            <person name="Kondo S."/>
            <person name="Konno H."/>
            <person name="Nakano K."/>
            <person name="Ninomiya N."/>
            <person name="Nishio T."/>
            <person name="Okada M."/>
            <person name="Plessy C."/>
            <person name="Shibata K."/>
            <person name="Shiraki T."/>
            <person name="Suzuki S."/>
            <person name="Tagami M."/>
            <person name="Waki K."/>
            <person name="Watahiki A."/>
            <person name="Okamura-Oho Y."/>
            <person name="Suzuki H."/>
            <person name="Kawai J."/>
            <person name="Hayashizaki Y."/>
        </authorList>
    </citation>
    <scope>NUCLEOTIDE SEQUENCE [LARGE SCALE MRNA]</scope>
    <source>
        <strain evidence="12">C57BL/6J</strain>
        <tissue evidence="12">Aorta</tissue>
        <tissue evidence="12">Vein</tissue>
    </source>
</reference>
<reference evidence="13" key="3">
    <citation type="journal article" date="2009" name="PLoS Biol.">
        <title>Lineage-specific biology revealed by a finished genome assembly of the mouse.</title>
        <authorList>
            <person name="Church D.M."/>
            <person name="Goodstadt L."/>
            <person name="Hillier L.W."/>
            <person name="Zody M.C."/>
            <person name="Goldstein S."/>
            <person name="She X."/>
            <person name="Bult C.J."/>
            <person name="Agarwala R."/>
            <person name="Cherry J.L."/>
            <person name="DiCuccio M."/>
            <person name="Hlavina W."/>
            <person name="Kapustin Y."/>
            <person name="Meric P."/>
            <person name="Maglott D."/>
            <person name="Birtle Z."/>
            <person name="Marques A.C."/>
            <person name="Graves T."/>
            <person name="Zhou S."/>
            <person name="Teague B."/>
            <person name="Potamousis K."/>
            <person name="Churas C."/>
            <person name="Place M."/>
            <person name="Herschleb J."/>
            <person name="Runnheim R."/>
            <person name="Forrest D."/>
            <person name="Amos-Landgraf J."/>
            <person name="Schwartz D.C."/>
            <person name="Cheng Z."/>
            <person name="Lindblad-Toh K."/>
            <person name="Eichler E.E."/>
            <person name="Ponting C.P."/>
        </authorList>
    </citation>
    <scope>NUCLEOTIDE SEQUENCE [LARGE SCALE GENOMIC DNA]</scope>
    <source>
        <strain>C57BL/6J</strain>
    </source>
</reference>
<reference evidence="10" key="4">
    <citation type="journal article" date="2004" name="Genome Res.">
        <title>The status, quality, and expansion of the NIH full-length cDNA project: the Mammalian Gene Collection (MGC).</title>
        <authorList>
            <consortium name="The MGC Project Team"/>
        </authorList>
    </citation>
    <scope>NUCLEOTIDE SEQUENCE [LARGE SCALE MRNA]</scope>
    <source>
        <tissue>Lung</tissue>
    </source>
</reference>